<accession>P9WLZ2</accession>
<accession>L0T6F7</accession>
<accession>Q11037</accession>
<proteinExistence type="predicted"/>
<name>Y1367_MYCTO</name>
<feature type="chain" id="PRO_0000427394" description="Uncharacterized protein MT1414">
    <location>
        <begin position="1"/>
        <end position="401"/>
    </location>
</feature>
<reference key="1">
    <citation type="journal article" date="2002" name="J. Bacteriol.">
        <title>Whole-genome comparison of Mycobacterium tuberculosis clinical and laboratory strains.</title>
        <authorList>
            <person name="Fleischmann R.D."/>
            <person name="Alland D."/>
            <person name="Eisen J.A."/>
            <person name="Carpenter L."/>
            <person name="White O."/>
            <person name="Peterson J.D."/>
            <person name="DeBoy R.T."/>
            <person name="Dodson R.J."/>
            <person name="Gwinn M.L."/>
            <person name="Haft D.H."/>
            <person name="Hickey E.K."/>
            <person name="Kolonay J.F."/>
            <person name="Nelson W.C."/>
            <person name="Umayam L.A."/>
            <person name="Ermolaeva M.D."/>
            <person name="Salzberg S.L."/>
            <person name="Delcher A."/>
            <person name="Utterback T.R."/>
            <person name="Weidman J.F."/>
            <person name="Khouri H.M."/>
            <person name="Gill J."/>
            <person name="Mikula A."/>
            <person name="Bishai W."/>
            <person name="Jacobs W.R. Jr."/>
            <person name="Venter J.C."/>
            <person name="Fraser C.M."/>
        </authorList>
    </citation>
    <scope>NUCLEOTIDE SEQUENCE [LARGE SCALE GENOMIC DNA]</scope>
    <source>
        <strain>CDC 1551 / Oshkosh</strain>
    </source>
</reference>
<protein>
    <recommendedName>
        <fullName>Uncharacterized protein MT1414</fullName>
    </recommendedName>
</protein>
<gene>
    <name type="ordered locus">MT1414</name>
</gene>
<organism>
    <name type="scientific">Mycobacterium tuberculosis (strain CDC 1551 / Oshkosh)</name>
    <dbReference type="NCBI Taxonomy" id="83331"/>
    <lineage>
        <taxon>Bacteria</taxon>
        <taxon>Bacillati</taxon>
        <taxon>Actinomycetota</taxon>
        <taxon>Actinomycetes</taxon>
        <taxon>Mycobacteriales</taxon>
        <taxon>Mycobacteriaceae</taxon>
        <taxon>Mycobacterium</taxon>
        <taxon>Mycobacterium tuberculosis complex</taxon>
    </lineage>
</organism>
<sequence length="401" mass="43742">MNLDGNQASIREVCDAGLLSGAVTMVWQREKLLQVNEIGYRDIDAGVPMQRDTLFRIASMTKPVTVAAAMSLVDEGKLALRDPITRWAPELCKVAVLDDAAGPLDRTHPARRAILIEDLLTHTSGLAYGFSVSGPISRAYQRLPFGQGPDVWLAALATLPLVHQPGDRVTYSHAIDVLGVIVSRIEDAPLYQIIDERVLGPAGMTDTGFYVSADAQRRAATMYRLDEQDRLRHDVMGPPHVTPPSFCNAGGGLWSTADDYLRFVRMLLGDGTVDGVRVLSPESVRLMRTDRLTDEQKRHSFLGAPFWVGRGFGLNLSVVTDPAKSRPLFGPGGLGTFSWPGAYGTWWQADPSADLILLYLIQHCPDLSVDAAAAVAGNPSLAKLRTAQPKFVRRTYRALGL</sequence>
<keyword id="KW-1185">Reference proteome</keyword>
<dbReference type="EMBL" id="AE000516">
    <property type="protein sequence ID" value="AAK45677.1"/>
    <property type="molecule type" value="Genomic_DNA"/>
</dbReference>
<dbReference type="PIR" id="D70957">
    <property type="entry name" value="D70957"/>
</dbReference>
<dbReference type="RefSeq" id="WP_003898846.1">
    <property type="nucleotide sequence ID" value="NZ_KK341227.1"/>
</dbReference>
<dbReference type="SMR" id="P9WLZ2"/>
<dbReference type="MEROPS" id="S12.950"/>
<dbReference type="KEGG" id="mtc:MT1414"/>
<dbReference type="HOGENOM" id="CLU_020027_11_2_11"/>
<dbReference type="Proteomes" id="UP000001020">
    <property type="component" value="Chromosome"/>
</dbReference>
<dbReference type="Gene3D" id="3.40.710.10">
    <property type="entry name" value="DD-peptidase/beta-lactamase superfamily"/>
    <property type="match status" value="1"/>
</dbReference>
<dbReference type="InterPro" id="IPR001466">
    <property type="entry name" value="Beta-lactam-related"/>
</dbReference>
<dbReference type="InterPro" id="IPR012338">
    <property type="entry name" value="Beta-lactam/transpept-like"/>
</dbReference>
<dbReference type="InterPro" id="IPR050789">
    <property type="entry name" value="Diverse_Enzym_Activities"/>
</dbReference>
<dbReference type="PANTHER" id="PTHR43283:SF3">
    <property type="entry name" value="BETA-LACTAMASE FAMILY PROTEIN (AFU_ORTHOLOGUE AFUA_5G07500)"/>
    <property type="match status" value="1"/>
</dbReference>
<dbReference type="PANTHER" id="PTHR43283">
    <property type="entry name" value="BETA-LACTAMASE-RELATED"/>
    <property type="match status" value="1"/>
</dbReference>
<dbReference type="Pfam" id="PF00144">
    <property type="entry name" value="Beta-lactamase"/>
    <property type="match status" value="1"/>
</dbReference>
<dbReference type="SUPFAM" id="SSF56601">
    <property type="entry name" value="beta-lactamase/transpeptidase-like"/>
    <property type="match status" value="1"/>
</dbReference>